<proteinExistence type="evidence at transcript level"/>
<feature type="transit peptide" description="Mitochondrion" evidence="1">
    <location>
        <begin position="1"/>
        <end position="36"/>
    </location>
</feature>
<feature type="chain" id="PRO_0000363524" description="Small ribosomal subunit protein mS81 (rPPR8)">
    <location>
        <begin position="37"/>
        <end position="668"/>
    </location>
</feature>
<feature type="repeat" description="PPR 1">
    <location>
        <begin position="286"/>
        <end position="320"/>
    </location>
</feature>
<feature type="repeat" description="PPR 2">
    <location>
        <begin position="321"/>
        <end position="355"/>
    </location>
</feature>
<feature type="repeat" description="PPR 3">
    <location>
        <begin position="396"/>
        <end position="430"/>
    </location>
</feature>
<feature type="repeat" description="PPR 4">
    <location>
        <begin position="431"/>
        <end position="465"/>
    </location>
</feature>
<feature type="repeat" description="PPR 5">
    <location>
        <begin position="466"/>
        <end position="496"/>
    </location>
</feature>
<feature type="repeat" description="PPR 6">
    <location>
        <begin position="502"/>
        <end position="537"/>
    </location>
</feature>
<feature type="repeat" description="PPR 7">
    <location>
        <begin position="543"/>
        <end position="577"/>
    </location>
</feature>
<sequence>MRYQQWRLMLLRSYHRSHLPYLSPCSQVTSISSRSFSSFIHPGIGALQQSEQLCPLRSPMTSSGNLVKSVGRSFSSEPAVEEKSSAEATVIDIFSRLSGEDEIRKELESSGVVISQDLALKVLRKLESNPDVAKSFFQWIKEASPEELSSKNYNMMLRILGGNGLVDEFWGLVDVMKKKGHGLSANVRDKVGDKFQKDGLESDLLRLRKLFTSDCLDNSAENVCDRVCKIVMKEEWGDDVEKRVRDLNVEFKSDLVKMIVERLDVEPRKALLFFRWIDESDLFKHDEKTYNAMARVLGKEKFLDRFQNIVVEMRSAGYEVEIETYVRVSTRFCQTKLIKEAVDLFEIAMAGSSSSNNPTPHCFCLLLKKIVTAKILDMDLFSRAVKVYTKNGNALTDSLLKSVLKSLRSVDRVEQSNELLKEMKRGGYVPSGDMQSMIASSLSRKGKKDEADEFVDFMESSGNNLDDKAMASLVEGYCDSGNLDEALVCFEKMVGNTGVSYADYSFEKLVLAYCNKNQVRDAYKLLSAQVTKNQLKPRHSTYKSLVTNLLTKKIARDGGFEEALSLLPIMKDHGFPPFIDPFMSYFSSTGKSTEALGFLKAMTSNNFPYISVVLRVFETMMKSARHSEAQDLLSLCPNYIRNNPDVLELFNTMKPNESAVEKPLAASA</sequence>
<gene>
    <name type="ordered locus">At5g15980</name>
    <name type="ORF">F1N13_120</name>
</gene>
<protein>
    <recommendedName>
        <fullName evidence="2">Small ribosomal subunit protein mS81 (rPPR8)</fullName>
    </recommendedName>
    <alternativeName>
        <fullName>Pentatricopeptide repeat-containing protein At5g15980, mitochondrial</fullName>
    </alternativeName>
</protein>
<organism>
    <name type="scientific">Arabidopsis thaliana</name>
    <name type="common">Mouse-ear cress</name>
    <dbReference type="NCBI Taxonomy" id="3702"/>
    <lineage>
        <taxon>Eukaryota</taxon>
        <taxon>Viridiplantae</taxon>
        <taxon>Streptophyta</taxon>
        <taxon>Embryophyta</taxon>
        <taxon>Tracheophyta</taxon>
        <taxon>Spermatophyta</taxon>
        <taxon>Magnoliopsida</taxon>
        <taxon>eudicotyledons</taxon>
        <taxon>Gunneridae</taxon>
        <taxon>Pentapetalae</taxon>
        <taxon>rosids</taxon>
        <taxon>malvids</taxon>
        <taxon>Brassicales</taxon>
        <taxon>Brassicaceae</taxon>
        <taxon>Camelineae</taxon>
        <taxon>Arabidopsis</taxon>
    </lineage>
</organism>
<name>PP387_ARATH</name>
<comment type="subunit">
    <text evidence="4">Component of the mitochondrial ribosome small subunit.</text>
</comment>
<comment type="subcellular location">
    <subcellularLocation>
        <location evidence="2 3">Mitochondrion</location>
    </subcellularLocation>
</comment>
<comment type="similarity">
    <text evidence="3">Belongs to the PPR family. P subfamily.</text>
</comment>
<comment type="sequence caution" evidence="3">
    <conflict type="erroneous initiation">
        <sequence resource="EMBL-CDS" id="BAD94238"/>
    </conflict>
</comment>
<comment type="sequence caution" evidence="3">
    <conflict type="erroneous gene model prediction">
        <sequence resource="EMBL-CDS" id="CAC01797"/>
    </conflict>
</comment>
<comment type="online information" name="Pentatricopeptide repeat proteins">
    <link uri="https://ppr.plantenergy.uwa.edu.au"/>
</comment>
<keyword id="KW-0496">Mitochondrion</keyword>
<keyword id="KW-1185">Reference proteome</keyword>
<keyword id="KW-0677">Repeat</keyword>
<keyword id="KW-0687">Ribonucleoprotein</keyword>
<keyword id="KW-0689">Ribosomal protein</keyword>
<keyword id="KW-0809">Transit peptide</keyword>
<dbReference type="EMBL" id="AL391145">
    <property type="protein sequence ID" value="CAC01797.1"/>
    <property type="status" value="ALT_SEQ"/>
    <property type="molecule type" value="Genomic_DNA"/>
</dbReference>
<dbReference type="EMBL" id="CP002688">
    <property type="protein sequence ID" value="AED92232.1"/>
    <property type="molecule type" value="Genomic_DNA"/>
</dbReference>
<dbReference type="EMBL" id="AY102122">
    <property type="protein sequence ID" value="AAM26690.1"/>
    <property type="molecule type" value="mRNA"/>
</dbReference>
<dbReference type="EMBL" id="BT002274">
    <property type="protein sequence ID" value="AAN72285.1"/>
    <property type="molecule type" value="mRNA"/>
</dbReference>
<dbReference type="EMBL" id="AK221891">
    <property type="protein sequence ID" value="BAD94238.1"/>
    <property type="status" value="ALT_INIT"/>
    <property type="molecule type" value="mRNA"/>
</dbReference>
<dbReference type="PIR" id="T51381">
    <property type="entry name" value="T51381"/>
</dbReference>
<dbReference type="RefSeq" id="NP_197102.2">
    <property type="nucleotide sequence ID" value="NM_121603.4"/>
</dbReference>
<dbReference type="SMR" id="Q8LPF1"/>
<dbReference type="BioGRID" id="16731">
    <property type="interactions" value="2"/>
</dbReference>
<dbReference type="FunCoup" id="Q8LPF1">
    <property type="interactions" value="1122"/>
</dbReference>
<dbReference type="IntAct" id="Q8LPF1">
    <property type="interactions" value="1"/>
</dbReference>
<dbReference type="STRING" id="3702.Q8LPF1"/>
<dbReference type="iPTMnet" id="Q8LPF1"/>
<dbReference type="SwissPalm" id="Q8LPF1"/>
<dbReference type="PaxDb" id="3702-AT5G15980.1"/>
<dbReference type="ProteomicsDB" id="249268"/>
<dbReference type="EnsemblPlants" id="AT5G15980.1">
    <property type="protein sequence ID" value="AT5G15980.1"/>
    <property type="gene ID" value="AT5G15980"/>
</dbReference>
<dbReference type="GeneID" id="831455"/>
<dbReference type="Gramene" id="AT5G15980.1">
    <property type="protein sequence ID" value="AT5G15980.1"/>
    <property type="gene ID" value="AT5G15980"/>
</dbReference>
<dbReference type="KEGG" id="ath:AT5G15980"/>
<dbReference type="Araport" id="AT5G15980"/>
<dbReference type="TAIR" id="AT5G15980">
    <property type="gene designation" value="RPPR8"/>
</dbReference>
<dbReference type="eggNOG" id="KOG4197">
    <property type="taxonomic scope" value="Eukaryota"/>
</dbReference>
<dbReference type="HOGENOM" id="CLU_022294_0_0_1"/>
<dbReference type="InParanoid" id="Q8LPF1"/>
<dbReference type="OMA" id="LYEFAMG"/>
<dbReference type="PhylomeDB" id="Q8LPF1"/>
<dbReference type="CD-CODE" id="4299E36E">
    <property type="entry name" value="Nucleolus"/>
</dbReference>
<dbReference type="PRO" id="PR:Q8LPF1"/>
<dbReference type="Proteomes" id="UP000006548">
    <property type="component" value="Chromosome 5"/>
</dbReference>
<dbReference type="ExpressionAtlas" id="Q8LPF1">
    <property type="expression patterns" value="baseline and differential"/>
</dbReference>
<dbReference type="GO" id="GO:0005739">
    <property type="term" value="C:mitochondrion"/>
    <property type="evidence" value="ECO:0007669"/>
    <property type="project" value="UniProtKB-SubCell"/>
</dbReference>
<dbReference type="GO" id="GO:1990904">
    <property type="term" value="C:ribonucleoprotein complex"/>
    <property type="evidence" value="ECO:0007669"/>
    <property type="project" value="UniProtKB-KW"/>
</dbReference>
<dbReference type="GO" id="GO:0005840">
    <property type="term" value="C:ribosome"/>
    <property type="evidence" value="ECO:0007669"/>
    <property type="project" value="UniProtKB-KW"/>
</dbReference>
<dbReference type="GO" id="GO:0003729">
    <property type="term" value="F:mRNA binding"/>
    <property type="evidence" value="ECO:0000314"/>
    <property type="project" value="TAIR"/>
</dbReference>
<dbReference type="GO" id="GO:0008380">
    <property type="term" value="P:RNA splicing"/>
    <property type="evidence" value="ECO:0007669"/>
    <property type="project" value="InterPro"/>
</dbReference>
<dbReference type="Gene3D" id="1.25.40.10">
    <property type="entry name" value="Tetratricopeptide repeat domain"/>
    <property type="match status" value="2"/>
</dbReference>
<dbReference type="InterPro" id="IPR044578">
    <property type="entry name" value="BIR6-like"/>
</dbReference>
<dbReference type="InterPro" id="IPR002885">
    <property type="entry name" value="Pentatricopeptide_rpt"/>
</dbReference>
<dbReference type="InterPro" id="IPR011990">
    <property type="entry name" value="TPR-like_helical_dom_sf"/>
</dbReference>
<dbReference type="NCBIfam" id="TIGR00756">
    <property type="entry name" value="PPR"/>
    <property type="match status" value="2"/>
</dbReference>
<dbReference type="PANTHER" id="PTHR47003">
    <property type="entry name" value="OS01G0970900 PROTEIN"/>
    <property type="match status" value="1"/>
</dbReference>
<dbReference type="PANTHER" id="PTHR47003:SF3">
    <property type="entry name" value="SMALL RIBOSOMAL SUBUNIT PROTEIN MS81 (RPPR8)"/>
    <property type="match status" value="1"/>
</dbReference>
<dbReference type="Pfam" id="PF01535">
    <property type="entry name" value="PPR"/>
    <property type="match status" value="3"/>
</dbReference>
<dbReference type="PROSITE" id="PS51375">
    <property type="entry name" value="PPR"/>
    <property type="match status" value="8"/>
</dbReference>
<reference key="1">
    <citation type="journal article" date="2000" name="Nature">
        <title>Sequence and analysis of chromosome 5 of the plant Arabidopsis thaliana.</title>
        <authorList>
            <person name="Tabata S."/>
            <person name="Kaneko T."/>
            <person name="Nakamura Y."/>
            <person name="Kotani H."/>
            <person name="Kato T."/>
            <person name="Asamizu E."/>
            <person name="Miyajima N."/>
            <person name="Sasamoto S."/>
            <person name="Kimura T."/>
            <person name="Hosouchi T."/>
            <person name="Kawashima K."/>
            <person name="Kohara M."/>
            <person name="Matsumoto M."/>
            <person name="Matsuno A."/>
            <person name="Muraki A."/>
            <person name="Nakayama S."/>
            <person name="Nakazaki N."/>
            <person name="Naruo K."/>
            <person name="Okumura S."/>
            <person name="Shinpo S."/>
            <person name="Takeuchi C."/>
            <person name="Wada T."/>
            <person name="Watanabe A."/>
            <person name="Yamada M."/>
            <person name="Yasuda M."/>
            <person name="Sato S."/>
            <person name="de la Bastide M."/>
            <person name="Huang E."/>
            <person name="Spiegel L."/>
            <person name="Gnoj L."/>
            <person name="O'Shaughnessy A."/>
            <person name="Preston R."/>
            <person name="Habermann K."/>
            <person name="Murray J."/>
            <person name="Johnson D."/>
            <person name="Rohlfing T."/>
            <person name="Nelson J."/>
            <person name="Stoneking T."/>
            <person name="Pepin K."/>
            <person name="Spieth J."/>
            <person name="Sekhon M."/>
            <person name="Armstrong J."/>
            <person name="Becker M."/>
            <person name="Belter E."/>
            <person name="Cordum H."/>
            <person name="Cordes M."/>
            <person name="Courtney L."/>
            <person name="Courtney W."/>
            <person name="Dante M."/>
            <person name="Du H."/>
            <person name="Edwards J."/>
            <person name="Fryman J."/>
            <person name="Haakensen B."/>
            <person name="Lamar E."/>
            <person name="Latreille P."/>
            <person name="Leonard S."/>
            <person name="Meyer R."/>
            <person name="Mulvaney E."/>
            <person name="Ozersky P."/>
            <person name="Riley A."/>
            <person name="Strowmatt C."/>
            <person name="Wagner-McPherson C."/>
            <person name="Wollam A."/>
            <person name="Yoakum M."/>
            <person name="Bell M."/>
            <person name="Dedhia N."/>
            <person name="Parnell L."/>
            <person name="Shah R."/>
            <person name="Rodriguez M."/>
            <person name="Hoon See L."/>
            <person name="Vil D."/>
            <person name="Baker J."/>
            <person name="Kirchoff K."/>
            <person name="Toth K."/>
            <person name="King L."/>
            <person name="Bahret A."/>
            <person name="Miller B."/>
            <person name="Marra M.A."/>
            <person name="Martienssen R."/>
            <person name="McCombie W.R."/>
            <person name="Wilson R.K."/>
            <person name="Murphy G."/>
            <person name="Bancroft I."/>
            <person name="Volckaert G."/>
            <person name="Wambutt R."/>
            <person name="Duesterhoeft A."/>
            <person name="Stiekema W."/>
            <person name="Pohl T."/>
            <person name="Entian K.-D."/>
            <person name="Terryn N."/>
            <person name="Hartley N."/>
            <person name="Bent E."/>
            <person name="Johnson S."/>
            <person name="Langham S.-A."/>
            <person name="McCullagh B."/>
            <person name="Robben J."/>
            <person name="Grymonprez B."/>
            <person name="Zimmermann W."/>
            <person name="Ramsperger U."/>
            <person name="Wedler H."/>
            <person name="Balke K."/>
            <person name="Wedler E."/>
            <person name="Peters S."/>
            <person name="van Staveren M."/>
            <person name="Dirkse W."/>
            <person name="Mooijman P."/>
            <person name="Klein Lankhorst R."/>
            <person name="Weitzenegger T."/>
            <person name="Bothe G."/>
            <person name="Rose M."/>
            <person name="Hauf J."/>
            <person name="Berneiser S."/>
            <person name="Hempel S."/>
            <person name="Feldpausch M."/>
            <person name="Lamberth S."/>
            <person name="Villarroel R."/>
            <person name="Gielen J."/>
            <person name="Ardiles W."/>
            <person name="Bents O."/>
            <person name="Lemcke K."/>
            <person name="Kolesov G."/>
            <person name="Mayer K.F.X."/>
            <person name="Rudd S."/>
            <person name="Schoof H."/>
            <person name="Schueller C."/>
            <person name="Zaccaria P."/>
            <person name="Mewes H.-W."/>
            <person name="Bevan M."/>
            <person name="Fransz P.F."/>
        </authorList>
    </citation>
    <scope>NUCLEOTIDE SEQUENCE [LARGE SCALE GENOMIC DNA]</scope>
    <source>
        <strain>cv. Columbia</strain>
    </source>
</reference>
<reference key="2">
    <citation type="journal article" date="2017" name="Plant J.">
        <title>Araport11: a complete reannotation of the Arabidopsis thaliana reference genome.</title>
        <authorList>
            <person name="Cheng C.Y."/>
            <person name="Krishnakumar V."/>
            <person name="Chan A.P."/>
            <person name="Thibaud-Nissen F."/>
            <person name="Schobel S."/>
            <person name="Town C.D."/>
        </authorList>
    </citation>
    <scope>GENOME REANNOTATION</scope>
    <source>
        <strain>cv. Columbia</strain>
    </source>
</reference>
<reference key="3">
    <citation type="journal article" date="2003" name="Science">
        <title>Empirical analysis of transcriptional activity in the Arabidopsis genome.</title>
        <authorList>
            <person name="Yamada K."/>
            <person name="Lim J."/>
            <person name="Dale J.M."/>
            <person name="Chen H."/>
            <person name="Shinn P."/>
            <person name="Palm C.J."/>
            <person name="Southwick A.M."/>
            <person name="Wu H.C."/>
            <person name="Kim C.J."/>
            <person name="Nguyen M."/>
            <person name="Pham P.K."/>
            <person name="Cheuk R.F."/>
            <person name="Karlin-Newmann G."/>
            <person name="Liu S.X."/>
            <person name="Lam B."/>
            <person name="Sakano H."/>
            <person name="Wu T."/>
            <person name="Yu G."/>
            <person name="Miranda M."/>
            <person name="Quach H.L."/>
            <person name="Tripp M."/>
            <person name="Chang C.H."/>
            <person name="Lee J.M."/>
            <person name="Toriumi M.J."/>
            <person name="Chan M.M."/>
            <person name="Tang C.C."/>
            <person name="Onodera C.S."/>
            <person name="Deng J.M."/>
            <person name="Akiyama K."/>
            <person name="Ansari Y."/>
            <person name="Arakawa T."/>
            <person name="Banh J."/>
            <person name="Banno F."/>
            <person name="Bowser L."/>
            <person name="Brooks S.Y."/>
            <person name="Carninci P."/>
            <person name="Chao Q."/>
            <person name="Choy N."/>
            <person name="Enju A."/>
            <person name="Goldsmith A.D."/>
            <person name="Gurjal M."/>
            <person name="Hansen N.F."/>
            <person name="Hayashizaki Y."/>
            <person name="Johnson-Hopson C."/>
            <person name="Hsuan V.W."/>
            <person name="Iida K."/>
            <person name="Karnes M."/>
            <person name="Khan S."/>
            <person name="Koesema E."/>
            <person name="Ishida J."/>
            <person name="Jiang P.X."/>
            <person name="Jones T."/>
            <person name="Kawai J."/>
            <person name="Kamiya A."/>
            <person name="Meyers C."/>
            <person name="Nakajima M."/>
            <person name="Narusaka M."/>
            <person name="Seki M."/>
            <person name="Sakurai T."/>
            <person name="Satou M."/>
            <person name="Tamse R."/>
            <person name="Vaysberg M."/>
            <person name="Wallender E.K."/>
            <person name="Wong C."/>
            <person name="Yamamura Y."/>
            <person name="Yuan S."/>
            <person name="Shinozaki K."/>
            <person name="Davis R.W."/>
            <person name="Theologis A."/>
            <person name="Ecker J.R."/>
        </authorList>
    </citation>
    <scope>NUCLEOTIDE SEQUENCE [LARGE SCALE MRNA]</scope>
    <source>
        <strain>cv. Columbia</strain>
    </source>
</reference>
<reference key="4">
    <citation type="submission" date="2005-03" db="EMBL/GenBank/DDBJ databases">
        <title>Large-scale analysis of RIKEN Arabidopsis full-length (RAFL) cDNAs.</title>
        <authorList>
            <person name="Totoki Y."/>
            <person name="Seki M."/>
            <person name="Ishida J."/>
            <person name="Nakajima M."/>
            <person name="Enju A."/>
            <person name="Kamiya A."/>
            <person name="Narusaka M."/>
            <person name="Shin-i T."/>
            <person name="Nakagawa M."/>
            <person name="Sakamoto N."/>
            <person name="Oishi K."/>
            <person name="Kohara Y."/>
            <person name="Kobayashi M."/>
            <person name="Toyoda A."/>
            <person name="Sakaki Y."/>
            <person name="Sakurai T."/>
            <person name="Iida K."/>
            <person name="Akiyama K."/>
            <person name="Satou M."/>
            <person name="Toyoda T."/>
            <person name="Konagaya A."/>
            <person name="Carninci P."/>
            <person name="Kawai J."/>
            <person name="Hayashizaki Y."/>
            <person name="Shinozaki K."/>
        </authorList>
    </citation>
    <scope>NUCLEOTIDE SEQUENCE [LARGE SCALE MRNA] OF 373-668</scope>
    <source>
        <strain>cv. Columbia</strain>
    </source>
</reference>
<reference key="5">
    <citation type="journal article" date="2004" name="Plant Cell">
        <title>Genome-wide analysis of Arabidopsis pentatricopeptide repeat proteins reveals their essential role in organelle biogenesis.</title>
        <authorList>
            <person name="Lurin C."/>
            <person name="Andres C."/>
            <person name="Aubourg S."/>
            <person name="Bellaoui M."/>
            <person name="Bitton F."/>
            <person name="Bruyere C."/>
            <person name="Caboche M."/>
            <person name="Debast C."/>
            <person name="Gualberto J."/>
            <person name="Hoffmann B."/>
            <person name="Lecharny A."/>
            <person name="Le Ret M."/>
            <person name="Martin-Magniette M.-L."/>
            <person name="Mireau H."/>
            <person name="Peeters N."/>
            <person name="Renou J.-P."/>
            <person name="Szurek B."/>
            <person name="Taconnat L."/>
            <person name="Small I."/>
        </authorList>
    </citation>
    <scope>GENE FAMILY</scope>
</reference>
<reference key="6">
    <citation type="journal article" date="2023" name="Plant Cell">
        <title>An updated nomenclature for plant ribosomal protein genes.</title>
        <authorList>
            <person name="Scarpin M.R."/>
            <person name="Busche M."/>
            <person name="Martinez R.E."/>
            <person name="Harper L.C."/>
            <person name="Reiser L."/>
            <person name="Szakonyi D."/>
            <person name="Merchante C."/>
            <person name="Lan T."/>
            <person name="Xiong W."/>
            <person name="Mo B."/>
            <person name="Tang G."/>
            <person name="Chen X."/>
            <person name="Bailey-Serres J."/>
            <person name="Browning K.S."/>
            <person name="Brunkard J.O."/>
        </authorList>
    </citation>
    <scope>NOMENCLATURE</scope>
</reference>
<evidence type="ECO:0000255" key="1"/>
<evidence type="ECO:0000303" key="2">
    <source>
    </source>
</evidence>
<evidence type="ECO:0000305" key="3"/>
<evidence type="ECO:0000305" key="4">
    <source>
    </source>
</evidence>
<accession>Q8LPF1</accession>
<accession>Q56WY8</accession>
<accession>Q9LFS6</accession>